<keyword id="KW-0032">Aminotransferase</keyword>
<keyword id="KW-0663">Pyridoxal phosphate</keyword>
<keyword id="KW-0670">Pyruvate</keyword>
<keyword id="KW-0808">Transferase</keyword>
<sequence length="367" mass="40326">MTSRNYLLLTPGPLTTSRTVKEAMLFDSCTWDDDYNIGVVEQIRQQLTELATASEGYTSVLLQGSGSYAVEAVLGSALGPQDKVLIVSNGAYGARMVEMAGLMGIAHHAYDCGEVARPDVQAIDAILNADPTISHIAMVHSETTTGMLNPIDEVGALAHRYGKTYIVDAMSSFGGIPMDIAALHIDYLISSANKCIQGVPGFAFVIAREQKLAACKGRSRSLSLDLYAQWRCMEDNHGKWRFTSPTHTVLAFAQALKELAKEGGVAARHQRYQQNQRSLVAGMRALGFNTLLDDELHSPIITAFYSPEDPQYRFSEFYRRLKEQGFVIYPGKVSQSDCFRIGNIGEVYAADITALLTAIRTAMYWTK</sequence>
<comment type="function">
    <text evidence="1">Involved in phosphonate degradation.</text>
</comment>
<comment type="catalytic activity">
    <reaction evidence="1">
        <text>(2-aminoethyl)phosphonate + pyruvate = phosphonoacetaldehyde + L-alanine</text>
        <dbReference type="Rhea" id="RHEA:17021"/>
        <dbReference type="ChEBI" id="CHEBI:15361"/>
        <dbReference type="ChEBI" id="CHEBI:57418"/>
        <dbReference type="ChEBI" id="CHEBI:57972"/>
        <dbReference type="ChEBI" id="CHEBI:58383"/>
        <dbReference type="EC" id="2.6.1.37"/>
    </reaction>
</comment>
<comment type="cofactor">
    <cofactor evidence="1">
        <name>pyridoxal 5'-phosphate</name>
        <dbReference type="ChEBI" id="CHEBI:597326"/>
    </cofactor>
</comment>
<comment type="subunit">
    <text evidence="1">Homodimer.</text>
</comment>
<comment type="similarity">
    <text evidence="1">Belongs to the class-V pyridoxal-phosphate-dependent aminotransferase family. PhnW subfamily.</text>
</comment>
<reference key="1">
    <citation type="submission" date="2007-11" db="EMBL/GenBank/DDBJ databases">
        <authorList>
            <consortium name="The Salmonella enterica serovar Paratyphi B Genome Sequencing Project"/>
            <person name="McClelland M."/>
            <person name="Sanderson E.K."/>
            <person name="Porwollik S."/>
            <person name="Spieth J."/>
            <person name="Clifton W.S."/>
            <person name="Fulton R."/>
            <person name="Cordes M."/>
            <person name="Wollam A."/>
            <person name="Shah N."/>
            <person name="Pepin K."/>
            <person name="Bhonagiri V."/>
            <person name="Nash W."/>
            <person name="Johnson M."/>
            <person name="Thiruvilangam P."/>
            <person name="Wilson R."/>
        </authorList>
    </citation>
    <scope>NUCLEOTIDE SEQUENCE [LARGE SCALE GENOMIC DNA]</scope>
    <source>
        <strain>ATCC BAA-1250 / SPB7</strain>
    </source>
</reference>
<organism>
    <name type="scientific">Salmonella paratyphi B (strain ATCC BAA-1250 / SPB7)</name>
    <dbReference type="NCBI Taxonomy" id="1016998"/>
    <lineage>
        <taxon>Bacteria</taxon>
        <taxon>Pseudomonadati</taxon>
        <taxon>Pseudomonadota</taxon>
        <taxon>Gammaproteobacteria</taxon>
        <taxon>Enterobacterales</taxon>
        <taxon>Enterobacteriaceae</taxon>
        <taxon>Salmonella</taxon>
    </lineage>
</organism>
<protein>
    <recommendedName>
        <fullName evidence="1">2-aminoethylphosphonate--pyruvate transaminase</fullName>
        <ecNumber evidence="1">2.6.1.37</ecNumber>
    </recommendedName>
    <alternativeName>
        <fullName evidence="1">2-aminoethylphosphonate aminotransferase</fullName>
    </alternativeName>
    <alternativeName>
        <fullName evidence="1">AEP transaminase</fullName>
        <shortName evidence="1">AEPT</shortName>
    </alternativeName>
</protein>
<dbReference type="EC" id="2.6.1.37" evidence="1"/>
<dbReference type="EMBL" id="CP000886">
    <property type="protein sequence ID" value="ABX68513.1"/>
    <property type="molecule type" value="Genomic_DNA"/>
</dbReference>
<dbReference type="RefSeq" id="WP_000203969.1">
    <property type="nucleotide sequence ID" value="NC_010102.1"/>
</dbReference>
<dbReference type="SMR" id="A9MWZ9"/>
<dbReference type="KEGG" id="spq:SPAB_03152"/>
<dbReference type="PATRIC" id="fig|1016998.12.peg.2973"/>
<dbReference type="HOGENOM" id="CLU_027686_3_1_6"/>
<dbReference type="BioCyc" id="SENT1016998:SPAB_RS12865-MONOMER"/>
<dbReference type="Proteomes" id="UP000008556">
    <property type="component" value="Chromosome"/>
</dbReference>
<dbReference type="GO" id="GO:0047304">
    <property type="term" value="F:2-aminoethylphosphonate-pyruvate transaminase activity"/>
    <property type="evidence" value="ECO:0007669"/>
    <property type="project" value="UniProtKB-UniRule"/>
</dbReference>
<dbReference type="GO" id="GO:0019700">
    <property type="term" value="P:organic phosphonate catabolic process"/>
    <property type="evidence" value="ECO:0007669"/>
    <property type="project" value="InterPro"/>
</dbReference>
<dbReference type="Gene3D" id="3.90.1150.10">
    <property type="entry name" value="Aspartate Aminotransferase, domain 1"/>
    <property type="match status" value="1"/>
</dbReference>
<dbReference type="Gene3D" id="3.40.640.10">
    <property type="entry name" value="Type I PLP-dependent aspartate aminotransferase-like (Major domain)"/>
    <property type="match status" value="1"/>
</dbReference>
<dbReference type="HAMAP" id="MF_01376">
    <property type="entry name" value="PhnW_aminotrans_5"/>
    <property type="match status" value="1"/>
</dbReference>
<dbReference type="InterPro" id="IPR000192">
    <property type="entry name" value="Aminotrans_V_dom"/>
</dbReference>
<dbReference type="InterPro" id="IPR012703">
    <property type="entry name" value="NH2EtPonate_pyrv_transaminase"/>
</dbReference>
<dbReference type="InterPro" id="IPR015424">
    <property type="entry name" value="PyrdxlP-dep_Trfase"/>
</dbReference>
<dbReference type="InterPro" id="IPR015421">
    <property type="entry name" value="PyrdxlP-dep_Trfase_major"/>
</dbReference>
<dbReference type="InterPro" id="IPR015422">
    <property type="entry name" value="PyrdxlP-dep_Trfase_small"/>
</dbReference>
<dbReference type="InterPro" id="IPR024169">
    <property type="entry name" value="SP_NH2Trfase/AEP_transaminase"/>
</dbReference>
<dbReference type="NCBIfam" id="TIGR03301">
    <property type="entry name" value="PhnW-AepZ"/>
    <property type="match status" value="1"/>
</dbReference>
<dbReference type="NCBIfam" id="NF010006">
    <property type="entry name" value="PRK13479.1"/>
    <property type="match status" value="1"/>
</dbReference>
<dbReference type="NCBIfam" id="TIGR02326">
    <property type="entry name" value="transamin_PhnW"/>
    <property type="match status" value="1"/>
</dbReference>
<dbReference type="PANTHER" id="PTHR42778">
    <property type="entry name" value="2-AMINOETHYLPHOSPHONATE--PYRUVATE TRANSAMINASE"/>
    <property type="match status" value="1"/>
</dbReference>
<dbReference type="PANTHER" id="PTHR42778:SF1">
    <property type="entry name" value="2-AMINOETHYLPHOSPHONATE--PYRUVATE TRANSAMINASE"/>
    <property type="match status" value="1"/>
</dbReference>
<dbReference type="Pfam" id="PF00266">
    <property type="entry name" value="Aminotran_5"/>
    <property type="match status" value="1"/>
</dbReference>
<dbReference type="PIRSF" id="PIRSF000524">
    <property type="entry name" value="SPT"/>
    <property type="match status" value="1"/>
</dbReference>
<dbReference type="SUPFAM" id="SSF53383">
    <property type="entry name" value="PLP-dependent transferases"/>
    <property type="match status" value="1"/>
</dbReference>
<proteinExistence type="inferred from homology"/>
<name>PHNW_SALPB</name>
<evidence type="ECO:0000255" key="1">
    <source>
        <dbReference type="HAMAP-Rule" id="MF_01376"/>
    </source>
</evidence>
<feature type="chain" id="PRO_1000087291" description="2-aminoethylphosphonate--pyruvate transaminase">
    <location>
        <begin position="1"/>
        <end position="367"/>
    </location>
</feature>
<feature type="modified residue" description="N6-(pyridoxal phosphate)lysine" evidence="1">
    <location>
        <position position="194"/>
    </location>
</feature>
<accession>A9MWZ9</accession>
<gene>
    <name evidence="1" type="primary">phnW</name>
    <name type="ordered locus">SPAB_03152</name>
</gene>